<keyword id="KW-0150">Chloroplast</keyword>
<keyword id="KW-0934">Plastid</keyword>
<keyword id="KW-0687">Ribonucleoprotein</keyword>
<keyword id="KW-0689">Ribosomal protein</keyword>
<keyword id="KW-0694">RNA-binding</keyword>
<keyword id="KW-0699">rRNA-binding</keyword>
<comment type="function">
    <text evidence="1">One of the primary rRNA binding proteins, it binds specifically to the 5'-end of 16S ribosomal RNA.</text>
</comment>
<comment type="subunit">
    <text evidence="1">Part of the 30S ribosomal subunit.</text>
</comment>
<comment type="subcellular location">
    <subcellularLocation>
        <location>Plastid</location>
        <location>Chloroplast</location>
    </subcellularLocation>
</comment>
<comment type="similarity">
    <text evidence="2">Belongs to the universal ribosomal protein uS17 family.</text>
</comment>
<gene>
    <name type="primary">rps17</name>
</gene>
<name>RR17_TRICV</name>
<sequence length="84" mass="9638">MPVKEKVGIVVSNKMQKTIVVKVESRYSHPIYSKTMTKTRKYLAHDEMGECNIGDQVLVQECRPLSKRKRWTLSKVLSKSSLVS</sequence>
<geneLocation type="chloroplast"/>
<evidence type="ECO:0000250" key="1"/>
<evidence type="ECO:0000305" key="2"/>
<feature type="chain" id="PRO_0000128507" description="Small ribosomal subunit protein uS17c">
    <location>
        <begin position="1"/>
        <end position="84"/>
    </location>
</feature>
<dbReference type="EMBL" id="Z67753">
    <property type="protein sequence ID" value="CAA91639.1"/>
    <property type="molecule type" value="Genomic_DNA"/>
</dbReference>
<dbReference type="PIR" id="S78266">
    <property type="entry name" value="S78266"/>
</dbReference>
<dbReference type="RefSeq" id="NP_043607.1">
    <property type="nucleotide sequence ID" value="NC_001713.1"/>
</dbReference>
<dbReference type="SMR" id="P49504"/>
<dbReference type="GeneID" id="801817"/>
<dbReference type="GO" id="GO:0009507">
    <property type="term" value="C:chloroplast"/>
    <property type="evidence" value="ECO:0007669"/>
    <property type="project" value="UniProtKB-SubCell"/>
</dbReference>
<dbReference type="GO" id="GO:0005739">
    <property type="term" value="C:mitochondrion"/>
    <property type="evidence" value="ECO:0007669"/>
    <property type="project" value="TreeGrafter"/>
</dbReference>
<dbReference type="GO" id="GO:1990904">
    <property type="term" value="C:ribonucleoprotein complex"/>
    <property type="evidence" value="ECO:0007669"/>
    <property type="project" value="UniProtKB-KW"/>
</dbReference>
<dbReference type="GO" id="GO:0005840">
    <property type="term" value="C:ribosome"/>
    <property type="evidence" value="ECO:0007669"/>
    <property type="project" value="UniProtKB-KW"/>
</dbReference>
<dbReference type="GO" id="GO:0019843">
    <property type="term" value="F:rRNA binding"/>
    <property type="evidence" value="ECO:0007669"/>
    <property type="project" value="UniProtKB-UniRule"/>
</dbReference>
<dbReference type="GO" id="GO:0003735">
    <property type="term" value="F:structural constituent of ribosome"/>
    <property type="evidence" value="ECO:0007669"/>
    <property type="project" value="InterPro"/>
</dbReference>
<dbReference type="GO" id="GO:0006412">
    <property type="term" value="P:translation"/>
    <property type="evidence" value="ECO:0007669"/>
    <property type="project" value="UniProtKB-UniRule"/>
</dbReference>
<dbReference type="CDD" id="cd00364">
    <property type="entry name" value="Ribosomal_uS17"/>
    <property type="match status" value="1"/>
</dbReference>
<dbReference type="Gene3D" id="2.40.50.140">
    <property type="entry name" value="Nucleic acid-binding proteins"/>
    <property type="match status" value="1"/>
</dbReference>
<dbReference type="HAMAP" id="MF_01345_B">
    <property type="entry name" value="Ribosomal_uS17_B"/>
    <property type="match status" value="1"/>
</dbReference>
<dbReference type="InterPro" id="IPR012340">
    <property type="entry name" value="NA-bd_OB-fold"/>
</dbReference>
<dbReference type="InterPro" id="IPR000266">
    <property type="entry name" value="Ribosomal_uS17"/>
</dbReference>
<dbReference type="InterPro" id="IPR019984">
    <property type="entry name" value="Ribosomal_uS17_bact/chlr"/>
</dbReference>
<dbReference type="InterPro" id="IPR019979">
    <property type="entry name" value="Ribosomal_uS17_CS"/>
</dbReference>
<dbReference type="NCBIfam" id="NF004123">
    <property type="entry name" value="PRK05610.1"/>
    <property type="match status" value="1"/>
</dbReference>
<dbReference type="NCBIfam" id="TIGR03635">
    <property type="entry name" value="uS17_bact"/>
    <property type="match status" value="1"/>
</dbReference>
<dbReference type="PANTHER" id="PTHR10744">
    <property type="entry name" value="40S RIBOSOMAL PROTEIN S11 FAMILY MEMBER"/>
    <property type="match status" value="1"/>
</dbReference>
<dbReference type="PANTHER" id="PTHR10744:SF1">
    <property type="entry name" value="SMALL RIBOSOMAL SUBUNIT PROTEIN US17M"/>
    <property type="match status" value="1"/>
</dbReference>
<dbReference type="Pfam" id="PF00366">
    <property type="entry name" value="Ribosomal_S17"/>
    <property type="match status" value="1"/>
</dbReference>
<dbReference type="PRINTS" id="PR00973">
    <property type="entry name" value="RIBOSOMALS17"/>
</dbReference>
<dbReference type="SUPFAM" id="SSF50249">
    <property type="entry name" value="Nucleic acid-binding proteins"/>
    <property type="match status" value="1"/>
</dbReference>
<dbReference type="PROSITE" id="PS00056">
    <property type="entry name" value="RIBOSOMAL_S17"/>
    <property type="match status" value="1"/>
</dbReference>
<reference key="1">
    <citation type="journal article" date="1995" name="Plant Mol. Biol. Rep.">
        <title>The chloroplast genome of a chlorophyll a+c-containing alga, Odontella sinensis.</title>
        <authorList>
            <person name="Kowallik K.V."/>
            <person name="Stoebe B."/>
            <person name="Schaffran I."/>
            <person name="Kroth-Pancic P."/>
            <person name="Freier U."/>
        </authorList>
    </citation>
    <scope>NUCLEOTIDE SEQUENCE [LARGE SCALE GENOMIC DNA]</scope>
</reference>
<protein>
    <recommendedName>
        <fullName evidence="2">Small ribosomal subunit protein uS17c</fullName>
    </recommendedName>
    <alternativeName>
        <fullName>30S ribosomal protein S17, chloroplastic</fullName>
    </alternativeName>
</protein>
<proteinExistence type="inferred from homology"/>
<accession>P49504</accession>
<organism>
    <name type="scientific">Trieres chinensis</name>
    <name type="common">Marine centric diatom</name>
    <name type="synonym">Odontella sinensis</name>
    <dbReference type="NCBI Taxonomy" id="1514140"/>
    <lineage>
        <taxon>Eukaryota</taxon>
        <taxon>Sar</taxon>
        <taxon>Stramenopiles</taxon>
        <taxon>Ochrophyta</taxon>
        <taxon>Bacillariophyta</taxon>
        <taxon>Mediophyceae</taxon>
        <taxon>Biddulphiophycidae</taxon>
        <taxon>Eupodiscales</taxon>
        <taxon>Parodontellaceae</taxon>
        <taxon>Trieres</taxon>
    </lineage>
</organism>